<reference key="1">
    <citation type="journal article" date="2003" name="Nat. Biotechnol.">
        <title>The genome sequence of the entomopathogenic bacterium Photorhabdus luminescens.</title>
        <authorList>
            <person name="Duchaud E."/>
            <person name="Rusniok C."/>
            <person name="Frangeul L."/>
            <person name="Buchrieser C."/>
            <person name="Givaudan A."/>
            <person name="Taourit S."/>
            <person name="Bocs S."/>
            <person name="Boursaux-Eude C."/>
            <person name="Chandler M."/>
            <person name="Charles J.-F."/>
            <person name="Dassa E."/>
            <person name="Derose R."/>
            <person name="Derzelle S."/>
            <person name="Freyssinet G."/>
            <person name="Gaudriault S."/>
            <person name="Medigue C."/>
            <person name="Lanois A."/>
            <person name="Powell K."/>
            <person name="Siguier P."/>
            <person name="Vincent R."/>
            <person name="Wingate V."/>
            <person name="Zouine M."/>
            <person name="Glaser P."/>
            <person name="Boemare N."/>
            <person name="Danchin A."/>
            <person name="Kunst F."/>
        </authorList>
    </citation>
    <scope>NUCLEOTIDE SEQUENCE [LARGE SCALE GENOMIC DNA]</scope>
    <source>
        <strain>DSM 15139 / CIP 105565 / TT01</strain>
    </source>
</reference>
<accession>Q7MZ97</accession>
<organism>
    <name type="scientific">Photorhabdus laumondii subsp. laumondii (strain DSM 15139 / CIP 105565 / TT01)</name>
    <name type="common">Photorhabdus luminescens subsp. laumondii</name>
    <dbReference type="NCBI Taxonomy" id="243265"/>
    <lineage>
        <taxon>Bacteria</taxon>
        <taxon>Pseudomonadati</taxon>
        <taxon>Pseudomonadota</taxon>
        <taxon>Gammaproteobacteria</taxon>
        <taxon>Enterobacterales</taxon>
        <taxon>Morganellaceae</taxon>
        <taxon>Photorhabdus</taxon>
    </lineage>
</organism>
<keyword id="KW-0012">Acyltransferase</keyword>
<keyword id="KW-0028">Amino-acid biosynthesis</keyword>
<keyword id="KW-0963">Cytoplasm</keyword>
<keyword id="KW-0486">Methionine biosynthesis</keyword>
<keyword id="KW-1185">Reference proteome</keyword>
<keyword id="KW-0808">Transferase</keyword>
<proteinExistence type="inferred from homology"/>
<gene>
    <name evidence="1" type="primary">metAS</name>
    <name type="ordered locus">plu4397</name>
</gene>
<name>METAS_PHOLL</name>
<sequence>MPICIPDELPAVNFLQNENVFVMTSTRANIQNIRPLKVLLLNLMPKKIETENQFLRLLSNTPLQVDIQLLRIDNRKCRNTPAEHLNNFYCDFEQIKHQNFDGLIVTGAPLGLVEFEDVAYWKQIERIISWAKEHVTSTLFICWAVQAALNILYGLPKFTREVKLSGVYYHSTLNPLALLTRGFDESFFAPHSRYADFPEQVVREHTDLDILSSSEDAGVYLLASKDKRMVFVTGHPEYDAGTLASEYLRDLAAGLAPKIPINYFPDNNPERKPLASWRSHGHLLFSNWLNYYVYQITPYDLTYMNPTLD</sequence>
<protein>
    <recommendedName>
        <fullName evidence="1">Homoserine O-succinyltransferase</fullName>
        <shortName evidence="1">HST</shortName>
        <ecNumber evidence="1">2.3.1.46</ecNumber>
    </recommendedName>
    <alternativeName>
        <fullName evidence="1">Homoserine transsuccinylase</fullName>
        <shortName evidence="1">HTS</shortName>
    </alternativeName>
</protein>
<dbReference type="EC" id="2.3.1.46" evidence="1"/>
<dbReference type="EMBL" id="BX571873">
    <property type="protein sequence ID" value="CAE16769.1"/>
    <property type="molecule type" value="Genomic_DNA"/>
</dbReference>
<dbReference type="RefSeq" id="WP_011148487.1">
    <property type="nucleotide sequence ID" value="NC_005126.1"/>
</dbReference>
<dbReference type="SMR" id="Q7MZ97"/>
<dbReference type="STRING" id="243265.plu4397"/>
<dbReference type="GeneID" id="48850607"/>
<dbReference type="KEGG" id="plu:plu4397"/>
<dbReference type="eggNOG" id="COG1897">
    <property type="taxonomic scope" value="Bacteria"/>
</dbReference>
<dbReference type="HOGENOM" id="CLU_057851_0_1_6"/>
<dbReference type="OrthoDB" id="9772423at2"/>
<dbReference type="UniPathway" id="UPA00051">
    <property type="reaction ID" value="UER00075"/>
</dbReference>
<dbReference type="Proteomes" id="UP000002514">
    <property type="component" value="Chromosome"/>
</dbReference>
<dbReference type="GO" id="GO:0005737">
    <property type="term" value="C:cytoplasm"/>
    <property type="evidence" value="ECO:0007669"/>
    <property type="project" value="UniProtKB-SubCell"/>
</dbReference>
<dbReference type="GO" id="GO:0004414">
    <property type="term" value="F:homoserine O-acetyltransferase activity"/>
    <property type="evidence" value="ECO:0007669"/>
    <property type="project" value="UniProtKB-UniRule"/>
</dbReference>
<dbReference type="GO" id="GO:0008899">
    <property type="term" value="F:homoserine O-succinyltransferase activity"/>
    <property type="evidence" value="ECO:0007669"/>
    <property type="project" value="UniProtKB-EC"/>
</dbReference>
<dbReference type="GO" id="GO:0019281">
    <property type="term" value="P:L-methionine biosynthetic process from homoserine via O-succinyl-L-homoserine and cystathionine"/>
    <property type="evidence" value="ECO:0007669"/>
    <property type="project" value="InterPro"/>
</dbReference>
<dbReference type="CDD" id="cd03131">
    <property type="entry name" value="GATase1_HTS"/>
    <property type="match status" value="1"/>
</dbReference>
<dbReference type="FunFam" id="3.40.50.880:FF:000004">
    <property type="entry name" value="Homoserine O-succinyltransferase"/>
    <property type="match status" value="1"/>
</dbReference>
<dbReference type="Gene3D" id="3.40.50.880">
    <property type="match status" value="1"/>
</dbReference>
<dbReference type="HAMAP" id="MF_00295">
    <property type="entry name" value="MetA_acyltransf"/>
    <property type="match status" value="1"/>
</dbReference>
<dbReference type="InterPro" id="IPR029062">
    <property type="entry name" value="Class_I_gatase-like"/>
</dbReference>
<dbReference type="InterPro" id="IPR005697">
    <property type="entry name" value="HST_MetA"/>
</dbReference>
<dbReference type="InterPro" id="IPR033752">
    <property type="entry name" value="MetA_family"/>
</dbReference>
<dbReference type="NCBIfam" id="TIGR01001">
    <property type="entry name" value="metA"/>
    <property type="match status" value="1"/>
</dbReference>
<dbReference type="PANTHER" id="PTHR20919">
    <property type="entry name" value="HOMOSERINE O-SUCCINYLTRANSFERASE"/>
    <property type="match status" value="1"/>
</dbReference>
<dbReference type="PANTHER" id="PTHR20919:SF0">
    <property type="entry name" value="HOMOSERINE O-SUCCINYLTRANSFERASE"/>
    <property type="match status" value="1"/>
</dbReference>
<dbReference type="Pfam" id="PF04204">
    <property type="entry name" value="HTS"/>
    <property type="match status" value="1"/>
</dbReference>
<dbReference type="PIRSF" id="PIRSF000450">
    <property type="entry name" value="H_ser_succinyltr"/>
    <property type="match status" value="1"/>
</dbReference>
<dbReference type="SUPFAM" id="SSF52317">
    <property type="entry name" value="Class I glutamine amidotransferase-like"/>
    <property type="match status" value="1"/>
</dbReference>
<evidence type="ECO:0000255" key="1">
    <source>
        <dbReference type="HAMAP-Rule" id="MF_00295"/>
    </source>
</evidence>
<feature type="chain" id="PRO_0000199754" description="Homoserine O-succinyltransferase">
    <location>
        <begin position="1"/>
        <end position="309"/>
    </location>
</feature>
<feature type="active site" description="Acyl-thioester intermediate" evidence="1">
    <location>
        <position position="142"/>
    </location>
</feature>
<feature type="active site" description="Proton acceptor" evidence="1">
    <location>
        <position position="235"/>
    </location>
</feature>
<feature type="active site" evidence="1">
    <location>
        <position position="237"/>
    </location>
</feature>
<feature type="binding site" evidence="1">
    <location>
        <position position="163"/>
    </location>
    <ligand>
        <name>substrate</name>
    </ligand>
</feature>
<feature type="binding site" evidence="1">
    <location>
        <position position="192"/>
    </location>
    <ligand>
        <name>substrate</name>
    </ligand>
</feature>
<feature type="binding site" evidence="1">
    <location>
        <position position="249"/>
    </location>
    <ligand>
        <name>substrate</name>
    </ligand>
</feature>
<feature type="site" description="Important for acyl-CoA specificity" evidence="1">
    <location>
        <position position="111"/>
    </location>
</feature>
<feature type="site" description="Important for substrate specificity" evidence="1">
    <location>
        <position position="192"/>
    </location>
</feature>
<comment type="function">
    <text evidence="1">Transfers a succinyl group from succinyl-CoA to L-homoserine, forming succinyl-L-homoserine.</text>
</comment>
<comment type="catalytic activity">
    <reaction evidence="1">
        <text>L-homoserine + succinyl-CoA = O-succinyl-L-homoserine + CoA</text>
        <dbReference type="Rhea" id="RHEA:22008"/>
        <dbReference type="ChEBI" id="CHEBI:57287"/>
        <dbReference type="ChEBI" id="CHEBI:57292"/>
        <dbReference type="ChEBI" id="CHEBI:57476"/>
        <dbReference type="ChEBI" id="CHEBI:57661"/>
        <dbReference type="EC" id="2.3.1.46"/>
    </reaction>
</comment>
<comment type="pathway">
    <text evidence="1">Amino-acid biosynthesis; L-methionine biosynthesis via de novo pathway; O-succinyl-L-homoserine from L-homoserine: step 1/1.</text>
</comment>
<comment type="subcellular location">
    <subcellularLocation>
        <location evidence="1">Cytoplasm</location>
    </subcellularLocation>
</comment>
<comment type="similarity">
    <text evidence="1">Belongs to the MetA family.</text>
</comment>